<proteinExistence type="evidence at transcript level"/>
<feature type="signal peptide" evidence="3">
    <location>
        <begin position="1"/>
        <end position="22"/>
    </location>
</feature>
<feature type="chain" id="PRO_0000011674" description="Glycoprotein hormone alpha-2">
    <location>
        <begin position="23"/>
        <end position="130"/>
    </location>
</feature>
<feature type="glycosylation site" description="N-linked (GlcNAc...) asparagine" evidence="3">
    <location>
        <position position="38"/>
    </location>
</feature>
<feature type="glycosylation site" description="N-linked (GlcNAc...) asparagine" evidence="3">
    <location>
        <position position="82"/>
    </location>
</feature>
<feature type="disulfide bond" evidence="4">
    <location>
        <begin position="32"/>
        <end position="90"/>
    </location>
</feature>
<feature type="disulfide bond" evidence="4">
    <location>
        <begin position="49"/>
        <end position="104"/>
    </location>
</feature>
<feature type="disulfide bond" evidence="4">
    <location>
        <begin position="58"/>
        <end position="120"/>
    </location>
</feature>
<feature type="disulfide bond" evidence="4">
    <location>
        <begin position="62"/>
        <end position="122"/>
    </location>
</feature>
<keyword id="KW-1015">Disulfide bond</keyword>
<keyword id="KW-0325">Glycoprotein</keyword>
<keyword id="KW-0372">Hormone</keyword>
<keyword id="KW-1185">Reference proteome</keyword>
<keyword id="KW-0964">Secreted</keyword>
<keyword id="KW-0732">Signal</keyword>
<name>GPHA2_RAT</name>
<reference key="1">
    <citation type="submission" date="2000-04" db="EMBL/GenBank/DDBJ databases">
        <title>A novel cysteine knot protein expressed in pancreatic acinar cells.</title>
        <authorList>
            <person name="Dasovich M."/>
            <person name="Ching A."/>
            <person name="Lok S."/>
            <person name="Sheppard P."/>
            <person name="Webster P."/>
        </authorList>
    </citation>
    <scope>NUCLEOTIDE SEQUENCE [MRNA]</scope>
</reference>
<sequence>MPMAPRVLLFCLLGLAVTEGHGLEAAVPIPGCHLHPFNVTVRSDRHGTCQGSHVAQACVGHCESSAFPSRYSVLVASGYRHNITSVSQCCTISSLKKVRVWLHCVGNQRGELEIFTARACQCDMCRLSRY</sequence>
<gene>
    <name type="primary">Gpha2</name>
    <name type="synonym">Gpa2</name>
    <name type="synonym">Zsig51</name>
</gene>
<protein>
    <recommendedName>
        <fullName>Glycoprotein hormone alpha-2</fullName>
    </recommendedName>
    <alternativeName>
        <fullName>Putative secreted protein Zsig51</fullName>
    </alternativeName>
    <alternativeName>
        <fullName>Thyrostimulin subunit alpha</fullName>
    </alternativeName>
</protein>
<comment type="function">
    <text evidence="2">Functions as a heterodimeric glycoprotein hormone with GPHB5 able to bind and activate the thyroid-stimulating hormone receptor (TSHR), leading to increased cAMP production. Plays a central role in controlling thyroid cell metabolism.</text>
</comment>
<comment type="subunit">
    <text evidence="2">Heterodimer with GPHB5; this heterodimer interacts with thyroid-stimulating hormone receptor (TSHR), and hence stimulates cAMP production.</text>
</comment>
<comment type="subcellular location">
    <subcellularLocation>
        <location evidence="1">Secreted</location>
    </subcellularLocation>
</comment>
<comment type="similarity">
    <text evidence="5">Belongs to the glycoprotein hormones subunit alpha family.</text>
</comment>
<organism>
    <name type="scientific">Rattus norvegicus</name>
    <name type="common">Rat</name>
    <dbReference type="NCBI Taxonomy" id="10116"/>
    <lineage>
        <taxon>Eukaryota</taxon>
        <taxon>Metazoa</taxon>
        <taxon>Chordata</taxon>
        <taxon>Craniata</taxon>
        <taxon>Vertebrata</taxon>
        <taxon>Euteleostomi</taxon>
        <taxon>Mammalia</taxon>
        <taxon>Eutheria</taxon>
        <taxon>Euarchontoglires</taxon>
        <taxon>Glires</taxon>
        <taxon>Rodentia</taxon>
        <taxon>Myomorpha</taxon>
        <taxon>Muroidea</taxon>
        <taxon>Muridae</taxon>
        <taxon>Murinae</taxon>
        <taxon>Rattus</taxon>
    </lineage>
</organism>
<evidence type="ECO:0000250" key="1"/>
<evidence type="ECO:0000250" key="2">
    <source>
        <dbReference type="UniProtKB" id="Q96T91"/>
    </source>
</evidence>
<evidence type="ECO:0000255" key="3"/>
<evidence type="ECO:0000255" key="4">
    <source>
        <dbReference type="PROSITE-ProRule" id="PRU00039"/>
    </source>
</evidence>
<evidence type="ECO:0000305" key="5"/>
<accession>Q925Q4</accession>
<dbReference type="EMBL" id="AF260741">
    <property type="protein sequence ID" value="AAK51640.1"/>
    <property type="molecule type" value="mRNA"/>
</dbReference>
<dbReference type="RefSeq" id="NP_598303.1">
    <property type="nucleotide sequence ID" value="NM_133619.2"/>
</dbReference>
<dbReference type="RefSeq" id="XP_008758291.1">
    <property type="nucleotide sequence ID" value="XM_008760069.2"/>
</dbReference>
<dbReference type="RefSeq" id="XP_008758292.1">
    <property type="nucleotide sequence ID" value="XM_008760070.2"/>
</dbReference>
<dbReference type="RefSeq" id="XP_063131610.1">
    <property type="nucleotide sequence ID" value="XM_063275540.1"/>
</dbReference>
<dbReference type="RefSeq" id="XP_063131655.1">
    <property type="nucleotide sequence ID" value="XM_063275585.1"/>
</dbReference>
<dbReference type="RefSeq" id="XP_063131695.1">
    <property type="nucleotide sequence ID" value="XM_063275625.1"/>
</dbReference>
<dbReference type="STRING" id="10116.ENSRNOP00000028536"/>
<dbReference type="GlyCosmos" id="Q925Q4">
    <property type="glycosylation" value="2 sites, No reported glycans"/>
</dbReference>
<dbReference type="GlyGen" id="Q925Q4">
    <property type="glycosylation" value="2 sites"/>
</dbReference>
<dbReference type="PaxDb" id="10116-ENSRNOP00000028536"/>
<dbReference type="Ensembl" id="ENSRNOT00000028536.4">
    <property type="protein sequence ID" value="ENSRNOP00000028536.2"/>
    <property type="gene ID" value="ENSRNOG00000021020.4"/>
</dbReference>
<dbReference type="GeneID" id="171158"/>
<dbReference type="KEGG" id="rno:171158"/>
<dbReference type="UCSC" id="RGD:621748">
    <property type="organism name" value="rat"/>
</dbReference>
<dbReference type="AGR" id="RGD:621748"/>
<dbReference type="CTD" id="170589"/>
<dbReference type="RGD" id="621748">
    <property type="gene designation" value="Gpha2"/>
</dbReference>
<dbReference type="eggNOG" id="ENOG502S2RQ">
    <property type="taxonomic scope" value="Eukaryota"/>
</dbReference>
<dbReference type="GeneTree" id="ENSGT00390000009379"/>
<dbReference type="HOGENOM" id="CLU_134026_1_0_1"/>
<dbReference type="InParanoid" id="Q925Q4"/>
<dbReference type="OMA" id="CTISKMQ"/>
<dbReference type="OrthoDB" id="9413153at2759"/>
<dbReference type="PhylomeDB" id="Q925Q4"/>
<dbReference type="TreeFam" id="TF332313"/>
<dbReference type="Reactome" id="R-RNO-375281">
    <property type="pathway name" value="Hormone ligand-binding receptors"/>
</dbReference>
<dbReference type="PRO" id="PR:Q925Q4"/>
<dbReference type="Proteomes" id="UP000002494">
    <property type="component" value="Chromosome 1"/>
</dbReference>
<dbReference type="Bgee" id="ENSRNOG00000021020">
    <property type="expression patterns" value="Expressed in thymus and 7 other cell types or tissues"/>
</dbReference>
<dbReference type="ExpressionAtlas" id="Q925Q4">
    <property type="expression patterns" value="baseline and differential"/>
</dbReference>
<dbReference type="GO" id="GO:0005576">
    <property type="term" value="C:extracellular region"/>
    <property type="evidence" value="ECO:0000266"/>
    <property type="project" value="RGD"/>
</dbReference>
<dbReference type="GO" id="GO:0005615">
    <property type="term" value="C:extracellular space"/>
    <property type="evidence" value="ECO:0000318"/>
    <property type="project" value="GO_Central"/>
</dbReference>
<dbReference type="GO" id="GO:0005179">
    <property type="term" value="F:hormone activity"/>
    <property type="evidence" value="ECO:0007669"/>
    <property type="project" value="UniProtKB-KW"/>
</dbReference>
<dbReference type="GO" id="GO:0046982">
    <property type="term" value="F:protein heterodimerization activity"/>
    <property type="evidence" value="ECO:0000266"/>
    <property type="project" value="RGD"/>
</dbReference>
<dbReference type="GO" id="GO:0031531">
    <property type="term" value="F:thyrotropin-releasing hormone receptor binding"/>
    <property type="evidence" value="ECO:0000266"/>
    <property type="project" value="RGD"/>
</dbReference>
<dbReference type="GO" id="GO:0007189">
    <property type="term" value="P:adenylate cyclase-activating G protein-coupled receptor signaling pathway"/>
    <property type="evidence" value="ECO:0000266"/>
    <property type="project" value="RGD"/>
</dbReference>
<dbReference type="GO" id="GO:0007166">
    <property type="term" value="P:cell surface receptor signaling pathway"/>
    <property type="evidence" value="ECO:0000266"/>
    <property type="project" value="RGD"/>
</dbReference>
<dbReference type="FunFam" id="2.10.90.10:FF:000027">
    <property type="entry name" value="Glycoprotein hormone alpha 2"/>
    <property type="match status" value="1"/>
</dbReference>
<dbReference type="Gene3D" id="2.10.90.10">
    <property type="entry name" value="Cystine-knot cytokines"/>
    <property type="match status" value="1"/>
</dbReference>
<dbReference type="InterPro" id="IPR006207">
    <property type="entry name" value="Cys_knot_C"/>
</dbReference>
<dbReference type="InterPro" id="IPR029034">
    <property type="entry name" value="Cystine-knot_cytokine"/>
</dbReference>
<dbReference type="InterPro" id="IPR000476">
    <property type="entry name" value="Glyco_hormone"/>
</dbReference>
<dbReference type="InterPro" id="IPR052680">
    <property type="entry name" value="Glyco_Hormone_Alpha"/>
</dbReference>
<dbReference type="PANTHER" id="PTHR31129">
    <property type="entry name" value="GLYCOPROTEIN HORMONE ALPHA-2"/>
    <property type="match status" value="1"/>
</dbReference>
<dbReference type="PANTHER" id="PTHR31129:SF2">
    <property type="entry name" value="GLYCOPROTEIN HORMONE ALPHA-2"/>
    <property type="match status" value="1"/>
</dbReference>
<dbReference type="SUPFAM" id="SSF57501">
    <property type="entry name" value="Cystine-knot cytokines"/>
    <property type="match status" value="1"/>
</dbReference>
<dbReference type="PROSITE" id="PS01185">
    <property type="entry name" value="CTCK_1"/>
    <property type="match status" value="1"/>
</dbReference>
<dbReference type="PROSITE" id="PS01225">
    <property type="entry name" value="CTCK_2"/>
    <property type="match status" value="1"/>
</dbReference>
<dbReference type="PROSITE" id="PS50277">
    <property type="entry name" value="GLYCO_HORMONE_ALPHA_3"/>
    <property type="match status" value="1"/>
</dbReference>